<sequence>MMNQDNPYAMNQTCKVCGEPAAGFHFGAFTCEGCKSFFGRSYNNLSSISDCKNNGECIINKKNRTACKACRLKKCLMVGMSKSGSRYGRRSNWFKIHCLLQEQQQQAVAAMAAHHNSQQAGGGSSGGSGGGQGMPNGVKGMSGVPPPAAAAAALGMLGHPGGYPGLYAVANAGGSSRSKEELMMLGLDGSVEYGSHKHPVVASPSVSSPDSHNSDSSVEVSSVRGNPLLHLGGKSNSGGSSSGADGSHSGGGGGGGGGVTPGRPPQMRKDLSPFLPLPFPGLASMPVMPPPAFLPPSHLLFPGYHPALYSHHQGLLKPTPEQQQAAVAAAAVQHLFNSSGAGQRFAPGTSPFANHQQHHKEEDQPAPARSPSTHANNNHLLTNGGAADELTKRFYLDAVLKSQQQSPPPTTKLPPHSKQDYSISALVTPNSESGRERVKSRQNEEDDEARADGIIDGAEHDDEEEDLVVSMTPPHSPAQQEERTPAGEDPRPSPGQDNPIDLSMKTTGSSLSSKSSSPEIEPETEISSDVEKNDTDDDDEDLKVTPEEEISVRETADPEIEEDHSSTTETAKTSIENTHNNNNSISNNNNNNNNNNNSILSDSEASETIKRKLDELIEASSENGKRLRLEAPVKVATSNALDLTTKV</sequence>
<evidence type="ECO:0000255" key="1">
    <source>
        <dbReference type="PROSITE-ProRule" id="PRU00407"/>
    </source>
</evidence>
<evidence type="ECO:0000256" key="2">
    <source>
        <dbReference type="SAM" id="MobiDB-lite"/>
    </source>
</evidence>
<evidence type="ECO:0000305" key="3"/>
<name>KNRL_DROME</name>
<feature type="chain" id="PRO_0000053745" description="Knirps-related protein">
    <location>
        <begin position="1"/>
        <end position="647"/>
    </location>
</feature>
<feature type="DNA-binding region" description="Nuclear receptor" evidence="1">
    <location>
        <begin position="11"/>
        <end position="87"/>
    </location>
</feature>
<feature type="zinc finger region" description="NR C4-type" evidence="1">
    <location>
        <begin position="14"/>
        <end position="34"/>
    </location>
</feature>
<feature type="zinc finger region" description="NR C4-type" evidence="1">
    <location>
        <begin position="51"/>
        <end position="75"/>
    </location>
</feature>
<feature type="region of interest" description="Disordered" evidence="2">
    <location>
        <begin position="111"/>
        <end position="142"/>
    </location>
</feature>
<feature type="region of interest" description="Disordered" evidence="2">
    <location>
        <begin position="196"/>
        <end position="274"/>
    </location>
</feature>
<feature type="region of interest" description="Disordered" evidence="2">
    <location>
        <begin position="340"/>
        <end position="383"/>
    </location>
</feature>
<feature type="region of interest" description="Disordered" evidence="2">
    <location>
        <begin position="402"/>
        <end position="600"/>
    </location>
</feature>
<feature type="compositionally biased region" description="Gly residues" evidence="2">
    <location>
        <begin position="120"/>
        <end position="134"/>
    </location>
</feature>
<feature type="compositionally biased region" description="Low complexity" evidence="2">
    <location>
        <begin position="200"/>
        <end position="223"/>
    </location>
</feature>
<feature type="compositionally biased region" description="Low complexity" evidence="2">
    <location>
        <begin position="232"/>
        <end position="247"/>
    </location>
</feature>
<feature type="compositionally biased region" description="Gly residues" evidence="2">
    <location>
        <begin position="248"/>
        <end position="260"/>
    </location>
</feature>
<feature type="compositionally biased region" description="Polar residues" evidence="2">
    <location>
        <begin position="370"/>
        <end position="381"/>
    </location>
</feature>
<feature type="compositionally biased region" description="Polar residues" evidence="2">
    <location>
        <begin position="420"/>
        <end position="432"/>
    </location>
</feature>
<feature type="compositionally biased region" description="Basic and acidic residues" evidence="2">
    <location>
        <begin position="433"/>
        <end position="443"/>
    </location>
</feature>
<feature type="compositionally biased region" description="Basic and acidic residues" evidence="2">
    <location>
        <begin position="480"/>
        <end position="491"/>
    </location>
</feature>
<feature type="compositionally biased region" description="Low complexity" evidence="2">
    <location>
        <begin position="502"/>
        <end position="519"/>
    </location>
</feature>
<feature type="compositionally biased region" description="Acidic residues" evidence="2">
    <location>
        <begin position="520"/>
        <end position="541"/>
    </location>
</feature>
<feature type="compositionally biased region" description="Basic and acidic residues" evidence="2">
    <location>
        <begin position="542"/>
        <end position="556"/>
    </location>
</feature>
<feature type="compositionally biased region" description="Polar residues" evidence="2">
    <location>
        <begin position="567"/>
        <end position="579"/>
    </location>
</feature>
<feature type="compositionally biased region" description="Low complexity" evidence="2">
    <location>
        <begin position="580"/>
        <end position="599"/>
    </location>
</feature>
<protein>
    <recommendedName>
        <fullName>Knirps-related protein</fullName>
    </recommendedName>
    <alternativeName>
        <fullName>Nuclear receptor subfamily 0 group A member 2</fullName>
    </alternativeName>
</protein>
<accession>P13054</accession>
<accession>Q9VPC8</accession>
<keyword id="KW-0217">Developmental protein</keyword>
<keyword id="KW-0238">DNA-binding</keyword>
<keyword id="KW-0479">Metal-binding</keyword>
<keyword id="KW-0539">Nucleus</keyword>
<keyword id="KW-0675">Receptor</keyword>
<keyword id="KW-1185">Reference proteome</keyword>
<keyword id="KW-0804">Transcription</keyword>
<keyword id="KW-0805">Transcription regulation</keyword>
<keyword id="KW-0862">Zinc</keyword>
<keyword id="KW-0863">Zinc-finger</keyword>
<comment type="subcellular location">
    <subcellularLocation>
        <location>Nucleus</location>
    </subcellularLocation>
</comment>
<comment type="similarity">
    <text evidence="3">Belongs to the nuclear hormone receptor family. NR0 subfamily.</text>
</comment>
<proteinExistence type="evidence at transcript level"/>
<gene>
    <name type="primary">knrl</name>
    <name type="synonym">NR0A2</name>
    <name type="ORF">CG4761</name>
</gene>
<reference key="1">
    <citation type="journal article" date="1988" name="Nature">
        <title>The Drosophila gene knirps-related is a member of the steroid-receptor gene superfamily.</title>
        <authorList>
            <person name="Oro A.E."/>
            <person name="Ong E.S."/>
            <person name="Margolis J.S."/>
            <person name="Posakony J.W."/>
            <person name="McKeown M."/>
            <person name="Evans R.M."/>
        </authorList>
    </citation>
    <scope>NUCLEOTIDE SEQUENCE [GENOMIC DNA]</scope>
</reference>
<reference key="2">
    <citation type="journal article" date="2000" name="Science">
        <title>The genome sequence of Drosophila melanogaster.</title>
        <authorList>
            <person name="Adams M.D."/>
            <person name="Celniker S.E."/>
            <person name="Holt R.A."/>
            <person name="Evans C.A."/>
            <person name="Gocayne J.D."/>
            <person name="Amanatides P.G."/>
            <person name="Scherer S.E."/>
            <person name="Li P.W."/>
            <person name="Hoskins R.A."/>
            <person name="Galle R.F."/>
            <person name="George R.A."/>
            <person name="Lewis S.E."/>
            <person name="Richards S."/>
            <person name="Ashburner M."/>
            <person name="Henderson S.N."/>
            <person name="Sutton G.G."/>
            <person name="Wortman J.R."/>
            <person name="Yandell M.D."/>
            <person name="Zhang Q."/>
            <person name="Chen L.X."/>
            <person name="Brandon R.C."/>
            <person name="Rogers Y.-H.C."/>
            <person name="Blazej R.G."/>
            <person name="Champe M."/>
            <person name="Pfeiffer B.D."/>
            <person name="Wan K.H."/>
            <person name="Doyle C."/>
            <person name="Baxter E.G."/>
            <person name="Helt G."/>
            <person name="Nelson C.R."/>
            <person name="Miklos G.L.G."/>
            <person name="Abril J.F."/>
            <person name="Agbayani A."/>
            <person name="An H.-J."/>
            <person name="Andrews-Pfannkoch C."/>
            <person name="Baldwin D."/>
            <person name="Ballew R.M."/>
            <person name="Basu A."/>
            <person name="Baxendale J."/>
            <person name="Bayraktaroglu L."/>
            <person name="Beasley E.M."/>
            <person name="Beeson K.Y."/>
            <person name="Benos P.V."/>
            <person name="Berman B.P."/>
            <person name="Bhandari D."/>
            <person name="Bolshakov S."/>
            <person name="Borkova D."/>
            <person name="Botchan M.R."/>
            <person name="Bouck J."/>
            <person name="Brokstein P."/>
            <person name="Brottier P."/>
            <person name="Burtis K.C."/>
            <person name="Busam D.A."/>
            <person name="Butler H."/>
            <person name="Cadieu E."/>
            <person name="Center A."/>
            <person name="Chandra I."/>
            <person name="Cherry J.M."/>
            <person name="Cawley S."/>
            <person name="Dahlke C."/>
            <person name="Davenport L.B."/>
            <person name="Davies P."/>
            <person name="de Pablos B."/>
            <person name="Delcher A."/>
            <person name="Deng Z."/>
            <person name="Mays A.D."/>
            <person name="Dew I."/>
            <person name="Dietz S.M."/>
            <person name="Dodson K."/>
            <person name="Doup L.E."/>
            <person name="Downes M."/>
            <person name="Dugan-Rocha S."/>
            <person name="Dunkov B.C."/>
            <person name="Dunn P."/>
            <person name="Durbin K.J."/>
            <person name="Evangelista C.C."/>
            <person name="Ferraz C."/>
            <person name="Ferriera S."/>
            <person name="Fleischmann W."/>
            <person name="Fosler C."/>
            <person name="Gabrielian A.E."/>
            <person name="Garg N.S."/>
            <person name="Gelbart W.M."/>
            <person name="Glasser K."/>
            <person name="Glodek A."/>
            <person name="Gong F."/>
            <person name="Gorrell J.H."/>
            <person name="Gu Z."/>
            <person name="Guan P."/>
            <person name="Harris M."/>
            <person name="Harris N.L."/>
            <person name="Harvey D.A."/>
            <person name="Heiman T.J."/>
            <person name="Hernandez J.R."/>
            <person name="Houck J."/>
            <person name="Hostin D."/>
            <person name="Houston K.A."/>
            <person name="Howland T.J."/>
            <person name="Wei M.-H."/>
            <person name="Ibegwam C."/>
            <person name="Jalali M."/>
            <person name="Kalush F."/>
            <person name="Karpen G.H."/>
            <person name="Ke Z."/>
            <person name="Kennison J.A."/>
            <person name="Ketchum K.A."/>
            <person name="Kimmel B.E."/>
            <person name="Kodira C.D."/>
            <person name="Kraft C.L."/>
            <person name="Kravitz S."/>
            <person name="Kulp D."/>
            <person name="Lai Z."/>
            <person name="Lasko P."/>
            <person name="Lei Y."/>
            <person name="Levitsky A.A."/>
            <person name="Li J.H."/>
            <person name="Li Z."/>
            <person name="Liang Y."/>
            <person name="Lin X."/>
            <person name="Liu X."/>
            <person name="Mattei B."/>
            <person name="McIntosh T.C."/>
            <person name="McLeod M.P."/>
            <person name="McPherson D."/>
            <person name="Merkulov G."/>
            <person name="Milshina N.V."/>
            <person name="Mobarry C."/>
            <person name="Morris J."/>
            <person name="Moshrefi A."/>
            <person name="Mount S.M."/>
            <person name="Moy M."/>
            <person name="Murphy B."/>
            <person name="Murphy L."/>
            <person name="Muzny D.M."/>
            <person name="Nelson D.L."/>
            <person name="Nelson D.R."/>
            <person name="Nelson K.A."/>
            <person name="Nixon K."/>
            <person name="Nusskern D.R."/>
            <person name="Pacleb J.M."/>
            <person name="Palazzolo M."/>
            <person name="Pittman G.S."/>
            <person name="Pan S."/>
            <person name="Pollard J."/>
            <person name="Puri V."/>
            <person name="Reese M.G."/>
            <person name="Reinert K."/>
            <person name="Remington K."/>
            <person name="Saunders R.D.C."/>
            <person name="Scheeler F."/>
            <person name="Shen H."/>
            <person name="Shue B.C."/>
            <person name="Siden-Kiamos I."/>
            <person name="Simpson M."/>
            <person name="Skupski M.P."/>
            <person name="Smith T.J."/>
            <person name="Spier E."/>
            <person name="Spradling A.C."/>
            <person name="Stapleton M."/>
            <person name="Strong R."/>
            <person name="Sun E."/>
            <person name="Svirskas R."/>
            <person name="Tector C."/>
            <person name="Turner R."/>
            <person name="Venter E."/>
            <person name="Wang A.H."/>
            <person name="Wang X."/>
            <person name="Wang Z.-Y."/>
            <person name="Wassarman D.A."/>
            <person name="Weinstock G.M."/>
            <person name="Weissenbach J."/>
            <person name="Williams S.M."/>
            <person name="Woodage T."/>
            <person name="Worley K.C."/>
            <person name="Wu D."/>
            <person name="Yang S."/>
            <person name="Yao Q.A."/>
            <person name="Ye J."/>
            <person name="Yeh R.-F."/>
            <person name="Zaveri J.S."/>
            <person name="Zhan M."/>
            <person name="Zhang G."/>
            <person name="Zhao Q."/>
            <person name="Zheng L."/>
            <person name="Zheng X.H."/>
            <person name="Zhong F.N."/>
            <person name="Zhong W."/>
            <person name="Zhou X."/>
            <person name="Zhu S.C."/>
            <person name="Zhu X."/>
            <person name="Smith H.O."/>
            <person name="Gibbs R.A."/>
            <person name="Myers E.W."/>
            <person name="Rubin G.M."/>
            <person name="Venter J.C."/>
        </authorList>
    </citation>
    <scope>NUCLEOTIDE SEQUENCE [LARGE SCALE GENOMIC DNA]</scope>
    <source>
        <strain>Berkeley</strain>
    </source>
</reference>
<reference key="3">
    <citation type="journal article" date="2002" name="Genome Biol.">
        <title>Annotation of the Drosophila melanogaster euchromatic genome: a systematic review.</title>
        <authorList>
            <person name="Misra S."/>
            <person name="Crosby M.A."/>
            <person name="Mungall C.J."/>
            <person name="Matthews B.B."/>
            <person name="Campbell K.S."/>
            <person name="Hradecky P."/>
            <person name="Huang Y."/>
            <person name="Kaminker J.S."/>
            <person name="Millburn G.H."/>
            <person name="Prochnik S.E."/>
            <person name="Smith C.D."/>
            <person name="Tupy J.L."/>
            <person name="Whitfield E.J."/>
            <person name="Bayraktaroglu L."/>
            <person name="Berman B.P."/>
            <person name="Bettencourt B.R."/>
            <person name="Celniker S.E."/>
            <person name="de Grey A.D.N.J."/>
            <person name="Drysdale R.A."/>
            <person name="Harris N.L."/>
            <person name="Richter J."/>
            <person name="Russo S."/>
            <person name="Schroeder A.J."/>
            <person name="Shu S.Q."/>
            <person name="Stapleton M."/>
            <person name="Yamada C."/>
            <person name="Ashburner M."/>
            <person name="Gelbart W.M."/>
            <person name="Rubin G.M."/>
            <person name="Lewis S.E."/>
        </authorList>
    </citation>
    <scope>GENOME REANNOTATION</scope>
    <source>
        <strain>Berkeley</strain>
    </source>
</reference>
<reference key="4">
    <citation type="journal article" date="2002" name="Genome Biol.">
        <title>A Drosophila full-length cDNA resource.</title>
        <authorList>
            <person name="Stapleton M."/>
            <person name="Carlson J.W."/>
            <person name="Brokstein P."/>
            <person name="Yu C."/>
            <person name="Champe M."/>
            <person name="George R.A."/>
            <person name="Guarin H."/>
            <person name="Kronmiller B."/>
            <person name="Pacleb J.M."/>
            <person name="Park S."/>
            <person name="Wan K.H."/>
            <person name="Rubin G.M."/>
            <person name="Celniker S.E."/>
        </authorList>
    </citation>
    <scope>NUCLEOTIDE SEQUENCE [LARGE SCALE MRNA]</scope>
    <source>
        <strain>Berkeley</strain>
        <tissue>Embryo</tissue>
    </source>
</reference>
<dbReference type="EMBL" id="X14153">
    <property type="protein sequence ID" value="CAA32365.1"/>
    <property type="molecule type" value="Genomic_DNA"/>
</dbReference>
<dbReference type="EMBL" id="AE014296">
    <property type="protein sequence ID" value="AAF51627.2"/>
    <property type="molecule type" value="Genomic_DNA"/>
</dbReference>
<dbReference type="EMBL" id="AY075383">
    <property type="protein sequence ID" value="AAL68221.1"/>
    <property type="molecule type" value="mRNA"/>
</dbReference>
<dbReference type="PIR" id="S06450">
    <property type="entry name" value="S06450"/>
</dbReference>
<dbReference type="RefSeq" id="NP_001303368.1">
    <property type="nucleotide sequence ID" value="NM_001316439.1"/>
</dbReference>
<dbReference type="RefSeq" id="NP_788552.1">
    <property type="nucleotide sequence ID" value="NM_176374.2"/>
</dbReference>
<dbReference type="SMR" id="P13054"/>
<dbReference type="BioGRID" id="65542">
    <property type="interactions" value="15"/>
</dbReference>
<dbReference type="DIP" id="DIP-20216N"/>
<dbReference type="FunCoup" id="P13054">
    <property type="interactions" value="63"/>
</dbReference>
<dbReference type="IntAct" id="P13054">
    <property type="interactions" value="2"/>
</dbReference>
<dbReference type="STRING" id="7227.FBpp0077870"/>
<dbReference type="GlyGen" id="P13054">
    <property type="glycosylation" value="1 site"/>
</dbReference>
<dbReference type="PaxDb" id="7227-FBpp0077870"/>
<dbReference type="EnsemblMetazoa" id="FBtr0078212">
    <property type="protein sequence ID" value="FBpp0077870"/>
    <property type="gene ID" value="FBgn0001323"/>
</dbReference>
<dbReference type="EnsemblMetazoa" id="FBtr0346815">
    <property type="protein sequence ID" value="FBpp0312390"/>
    <property type="gene ID" value="FBgn0001323"/>
</dbReference>
<dbReference type="GeneID" id="40285"/>
<dbReference type="KEGG" id="dme:Dmel_CG4761"/>
<dbReference type="AGR" id="FB:FBgn0001323"/>
<dbReference type="CTD" id="40285"/>
<dbReference type="FlyBase" id="FBgn0001323">
    <property type="gene designation" value="knrl"/>
</dbReference>
<dbReference type="VEuPathDB" id="VectorBase:FBgn0001323"/>
<dbReference type="eggNOG" id="ENOG502RZKC">
    <property type="taxonomic scope" value="Eukaryota"/>
</dbReference>
<dbReference type="GeneTree" id="ENSGT00940000170271"/>
<dbReference type="HOGENOM" id="CLU_409562_0_0_1"/>
<dbReference type="InParanoid" id="P13054"/>
<dbReference type="OMA" id="QHHILAN"/>
<dbReference type="OrthoDB" id="5850793at2759"/>
<dbReference type="PhylomeDB" id="P13054"/>
<dbReference type="Reactome" id="R-DME-1251985">
    <property type="pathway name" value="Nuclear signaling by ERBB4"/>
</dbReference>
<dbReference type="Reactome" id="R-DME-1257604">
    <property type="pathway name" value="PIP3 activates AKT signaling"/>
</dbReference>
<dbReference type="Reactome" id="R-DME-3371497">
    <property type="pathway name" value="HSP90 chaperone cycle for steroid hormone receptors (SHR) in the presence of ligand"/>
</dbReference>
<dbReference type="Reactome" id="R-DME-383280">
    <property type="pathway name" value="Nuclear Receptor transcription pathway"/>
</dbReference>
<dbReference type="Reactome" id="R-DME-5625886">
    <property type="pathway name" value="Activated PKN1 stimulates transcription of AR (androgen receptor) regulated genes KLK2 and KLK3"/>
</dbReference>
<dbReference type="Reactome" id="R-DME-5689880">
    <property type="pathway name" value="Ub-specific processing proteases"/>
</dbReference>
<dbReference type="Reactome" id="R-DME-5689896">
    <property type="pathway name" value="Ovarian tumor domain proteases"/>
</dbReference>
<dbReference type="Reactome" id="R-DME-6811558">
    <property type="pathway name" value="PI5P, PP2A and IER3 Regulate PI3K/AKT Signaling"/>
</dbReference>
<dbReference type="Reactome" id="R-DME-8931987">
    <property type="pathway name" value="RUNX1 regulates estrogen receptor mediated transcription"/>
</dbReference>
<dbReference type="Reactome" id="R-DME-8939211">
    <property type="pathway name" value="ESR-mediated signaling"/>
</dbReference>
<dbReference type="Reactome" id="R-DME-8940973">
    <property type="pathway name" value="RUNX2 regulates osteoblast differentiation"/>
</dbReference>
<dbReference type="Reactome" id="R-DME-9009391">
    <property type="pathway name" value="Extra-nuclear estrogen signaling"/>
</dbReference>
<dbReference type="Reactome" id="R-DME-9018519">
    <property type="pathway name" value="Estrogen-dependent gene expression"/>
</dbReference>
<dbReference type="Reactome" id="R-DME-9841251">
    <property type="pathway name" value="Mitochondrial unfolded protein response (UPRmt)"/>
</dbReference>
<dbReference type="SignaLink" id="P13054"/>
<dbReference type="BioGRID-ORCS" id="40285">
    <property type="hits" value="0 hits in 1 CRISPR screen"/>
</dbReference>
<dbReference type="ChiTaRS" id="knrl">
    <property type="organism name" value="fly"/>
</dbReference>
<dbReference type="GenomeRNAi" id="40285"/>
<dbReference type="PRO" id="PR:P13054"/>
<dbReference type="Proteomes" id="UP000000803">
    <property type="component" value="Chromosome 3L"/>
</dbReference>
<dbReference type="Bgee" id="FBgn0001323">
    <property type="expression patterns" value="Expressed in adult tracheocyte (Drosophila) in testis and 154 other cell types or tissues"/>
</dbReference>
<dbReference type="ExpressionAtlas" id="P13054">
    <property type="expression patterns" value="baseline and differential"/>
</dbReference>
<dbReference type="GO" id="GO:0000785">
    <property type="term" value="C:chromatin"/>
    <property type="evidence" value="ECO:0000318"/>
    <property type="project" value="GO_Central"/>
</dbReference>
<dbReference type="GO" id="GO:0005634">
    <property type="term" value="C:nucleus"/>
    <property type="evidence" value="ECO:0000318"/>
    <property type="project" value="GO_Central"/>
</dbReference>
<dbReference type="GO" id="GO:0034056">
    <property type="term" value="F:estrogen response element binding"/>
    <property type="evidence" value="ECO:0000318"/>
    <property type="project" value="GO_Central"/>
</dbReference>
<dbReference type="GO" id="GO:0004879">
    <property type="term" value="F:nuclear receptor activity"/>
    <property type="evidence" value="ECO:0000318"/>
    <property type="project" value="GO_Central"/>
</dbReference>
<dbReference type="GO" id="GO:0008270">
    <property type="term" value="F:zinc ion binding"/>
    <property type="evidence" value="ECO:0007669"/>
    <property type="project" value="UniProtKB-KW"/>
</dbReference>
<dbReference type="GO" id="GO:0007427">
    <property type="term" value="P:epithelial cell migration, open tracheal system"/>
    <property type="evidence" value="ECO:0000304"/>
    <property type="project" value="FlyBase"/>
</dbReference>
<dbReference type="GO" id="GO:0045892">
    <property type="term" value="P:negative regulation of DNA-templated transcription"/>
    <property type="evidence" value="ECO:0000314"/>
    <property type="project" value="FlyBase"/>
</dbReference>
<dbReference type="GO" id="GO:0007088">
    <property type="term" value="P:regulation of mitotic nuclear division"/>
    <property type="evidence" value="ECO:0000315"/>
    <property type="project" value="FlyBase"/>
</dbReference>
<dbReference type="GO" id="GO:0006357">
    <property type="term" value="P:regulation of transcription by RNA polymerase II"/>
    <property type="evidence" value="ECO:0000318"/>
    <property type="project" value="GO_Central"/>
</dbReference>
<dbReference type="FunFam" id="3.30.50.10:FF:000034">
    <property type="entry name" value="CLUMA_CG002674, isoform A"/>
    <property type="match status" value="1"/>
</dbReference>
<dbReference type="Gene3D" id="3.30.50.10">
    <property type="entry name" value="Erythroid Transcription Factor GATA-1, subunit A"/>
    <property type="match status" value="1"/>
</dbReference>
<dbReference type="InterPro" id="IPR050200">
    <property type="entry name" value="Nuclear_hormone_rcpt_NR3"/>
</dbReference>
<dbReference type="InterPro" id="IPR001628">
    <property type="entry name" value="Znf_hrmn_rcpt"/>
</dbReference>
<dbReference type="InterPro" id="IPR013088">
    <property type="entry name" value="Znf_NHR/GATA"/>
</dbReference>
<dbReference type="PANTHER" id="PTHR48092">
    <property type="entry name" value="KNIRPS-RELATED PROTEIN-RELATED"/>
    <property type="match status" value="1"/>
</dbReference>
<dbReference type="Pfam" id="PF00105">
    <property type="entry name" value="zf-C4"/>
    <property type="match status" value="1"/>
</dbReference>
<dbReference type="PRINTS" id="PR00047">
    <property type="entry name" value="STROIDFINGER"/>
</dbReference>
<dbReference type="SMART" id="SM00399">
    <property type="entry name" value="ZnF_C4"/>
    <property type="match status" value="1"/>
</dbReference>
<dbReference type="SUPFAM" id="SSF57716">
    <property type="entry name" value="Glucocorticoid receptor-like (DNA-binding domain)"/>
    <property type="match status" value="1"/>
</dbReference>
<dbReference type="PROSITE" id="PS00031">
    <property type="entry name" value="NUCLEAR_REC_DBD_1"/>
    <property type="match status" value="1"/>
</dbReference>
<dbReference type="PROSITE" id="PS51030">
    <property type="entry name" value="NUCLEAR_REC_DBD_2"/>
    <property type="match status" value="1"/>
</dbReference>
<organism>
    <name type="scientific">Drosophila melanogaster</name>
    <name type="common">Fruit fly</name>
    <dbReference type="NCBI Taxonomy" id="7227"/>
    <lineage>
        <taxon>Eukaryota</taxon>
        <taxon>Metazoa</taxon>
        <taxon>Ecdysozoa</taxon>
        <taxon>Arthropoda</taxon>
        <taxon>Hexapoda</taxon>
        <taxon>Insecta</taxon>
        <taxon>Pterygota</taxon>
        <taxon>Neoptera</taxon>
        <taxon>Endopterygota</taxon>
        <taxon>Diptera</taxon>
        <taxon>Brachycera</taxon>
        <taxon>Muscomorpha</taxon>
        <taxon>Ephydroidea</taxon>
        <taxon>Drosophilidae</taxon>
        <taxon>Drosophila</taxon>
        <taxon>Sophophora</taxon>
    </lineage>
</organism>